<evidence type="ECO:0000255" key="1">
    <source>
        <dbReference type="HAMAP-Rule" id="MF_00783"/>
    </source>
</evidence>
<accession>B8H5S2</accession>
<reference key="1">
    <citation type="journal article" date="2010" name="J. Bacteriol.">
        <title>The genetic basis of laboratory adaptation in Caulobacter crescentus.</title>
        <authorList>
            <person name="Marks M.E."/>
            <person name="Castro-Rojas C.M."/>
            <person name="Teiling C."/>
            <person name="Du L."/>
            <person name="Kapatral V."/>
            <person name="Walunas T.L."/>
            <person name="Crosson S."/>
        </authorList>
    </citation>
    <scope>NUCLEOTIDE SEQUENCE [LARGE SCALE GENOMIC DNA]</scope>
    <source>
        <strain>NA1000 / CB15N</strain>
    </source>
</reference>
<keyword id="KW-1005">Bacterial flagellum biogenesis</keyword>
<keyword id="KW-1185">Reference proteome</keyword>
<keyword id="KW-0678">Repressor</keyword>
<keyword id="KW-0694">RNA-binding</keyword>
<feature type="chain" id="PRO_1000148471" description="Probable flagellum biosynthesis repressor protein FlbT">
    <location>
        <begin position="1"/>
        <end position="141"/>
    </location>
</feature>
<proteinExistence type="inferred from homology"/>
<protein>
    <recommendedName>
        <fullName evidence="1">Probable flagellum biosynthesis repressor protein FlbT</fullName>
    </recommendedName>
</protein>
<dbReference type="EMBL" id="CP001340">
    <property type="protein sequence ID" value="ACL94990.1"/>
    <property type="molecule type" value="Genomic_DNA"/>
</dbReference>
<dbReference type="RefSeq" id="WP_010919334.1">
    <property type="nucleotide sequence ID" value="NC_011916.1"/>
</dbReference>
<dbReference type="RefSeq" id="YP_002516898.1">
    <property type="nucleotide sequence ID" value="NC_011916.1"/>
</dbReference>
<dbReference type="SMR" id="B8H5S2"/>
<dbReference type="GeneID" id="7333199"/>
<dbReference type="KEGG" id="ccs:CCNA_01525"/>
<dbReference type="PATRIC" id="fig|565050.3.peg.1503"/>
<dbReference type="HOGENOM" id="CLU_130913_0_0_5"/>
<dbReference type="OrthoDB" id="8561314at2"/>
<dbReference type="PhylomeDB" id="B8H5S2"/>
<dbReference type="Proteomes" id="UP000001364">
    <property type="component" value="Chromosome"/>
</dbReference>
<dbReference type="GO" id="GO:0048027">
    <property type="term" value="F:mRNA 5'-UTR binding"/>
    <property type="evidence" value="ECO:0007669"/>
    <property type="project" value="UniProtKB-UniRule"/>
</dbReference>
<dbReference type="GO" id="GO:0044781">
    <property type="term" value="P:bacterial-type flagellum organization"/>
    <property type="evidence" value="ECO:0007669"/>
    <property type="project" value="UniProtKB-KW"/>
</dbReference>
<dbReference type="GO" id="GO:0006402">
    <property type="term" value="P:mRNA catabolic process"/>
    <property type="evidence" value="ECO:0007669"/>
    <property type="project" value="InterPro"/>
</dbReference>
<dbReference type="GO" id="GO:1902209">
    <property type="term" value="P:negative regulation of bacterial-type flagellum assembly"/>
    <property type="evidence" value="ECO:0007669"/>
    <property type="project" value="UniProtKB-UniRule"/>
</dbReference>
<dbReference type="HAMAP" id="MF_00783">
    <property type="entry name" value="FlbT"/>
    <property type="match status" value="1"/>
</dbReference>
<dbReference type="InterPro" id="IPR009967">
    <property type="entry name" value="Flagellum_FlbT"/>
</dbReference>
<dbReference type="NCBIfam" id="NF001995">
    <property type="entry name" value="PRK00794.1-1"/>
    <property type="match status" value="1"/>
</dbReference>
<dbReference type="Pfam" id="PF07378">
    <property type="entry name" value="FlbT"/>
    <property type="match status" value="1"/>
</dbReference>
<dbReference type="PIRSF" id="PIRSF009533">
    <property type="entry name" value="FlbT"/>
    <property type="match status" value="1"/>
</dbReference>
<organism>
    <name type="scientific">Caulobacter vibrioides (strain NA1000 / CB15N)</name>
    <name type="common">Caulobacter crescentus</name>
    <dbReference type="NCBI Taxonomy" id="565050"/>
    <lineage>
        <taxon>Bacteria</taxon>
        <taxon>Pseudomonadati</taxon>
        <taxon>Pseudomonadota</taxon>
        <taxon>Alphaproteobacteria</taxon>
        <taxon>Caulobacterales</taxon>
        <taxon>Caulobacteraceae</taxon>
        <taxon>Caulobacter</taxon>
    </lineage>
</organism>
<sequence length="141" mass="15863">MPLKLSLKPGEKFVLNGAVVQNGDRRGVLVLQNKASVLREKDIMQPDQVTTPARHIYFPVMMMYLDEVGAEKFYEEFATRLNEFMGVVRNPVVLQDCIAISKHVMAREYYKALMLSRKLIEYEDERLGHVSSGVSAGGDAG</sequence>
<name>FLBT_CAUVN</name>
<comment type="function">
    <text evidence="1">Has a post-transcriptional repressor function in flagellum biogenesis. Associates with the 5'-UTR of fljK mRNA and promotes its degradation.</text>
</comment>
<comment type="similarity">
    <text evidence="1">Belongs to the FlbT family.</text>
</comment>
<gene>
    <name evidence="1" type="primary">flbT</name>
    <name type="ordered locus">CCNA_01525</name>
</gene>